<name>RL21_GLAP5</name>
<proteinExistence type="inferred from homology"/>
<evidence type="ECO:0000255" key="1">
    <source>
        <dbReference type="HAMAP-Rule" id="MF_01363"/>
    </source>
</evidence>
<evidence type="ECO:0000305" key="2"/>
<dbReference type="EMBL" id="CP001321">
    <property type="protein sequence ID" value="ACL33527.1"/>
    <property type="molecule type" value="Genomic_DNA"/>
</dbReference>
<dbReference type="RefSeq" id="WP_005711422.1">
    <property type="nucleotide sequence ID" value="NC_011852.1"/>
</dbReference>
<dbReference type="SMR" id="B8F875"/>
<dbReference type="STRING" id="557723.HAPS_2070"/>
<dbReference type="GeneID" id="66619515"/>
<dbReference type="KEGG" id="hap:HAPS_2070"/>
<dbReference type="HOGENOM" id="CLU_061463_3_2_6"/>
<dbReference type="Proteomes" id="UP000006743">
    <property type="component" value="Chromosome"/>
</dbReference>
<dbReference type="GO" id="GO:0005737">
    <property type="term" value="C:cytoplasm"/>
    <property type="evidence" value="ECO:0007669"/>
    <property type="project" value="UniProtKB-ARBA"/>
</dbReference>
<dbReference type="GO" id="GO:1990904">
    <property type="term" value="C:ribonucleoprotein complex"/>
    <property type="evidence" value="ECO:0007669"/>
    <property type="project" value="UniProtKB-KW"/>
</dbReference>
<dbReference type="GO" id="GO:0005840">
    <property type="term" value="C:ribosome"/>
    <property type="evidence" value="ECO:0007669"/>
    <property type="project" value="UniProtKB-KW"/>
</dbReference>
<dbReference type="GO" id="GO:0019843">
    <property type="term" value="F:rRNA binding"/>
    <property type="evidence" value="ECO:0007669"/>
    <property type="project" value="UniProtKB-UniRule"/>
</dbReference>
<dbReference type="GO" id="GO:0003735">
    <property type="term" value="F:structural constituent of ribosome"/>
    <property type="evidence" value="ECO:0007669"/>
    <property type="project" value="InterPro"/>
</dbReference>
<dbReference type="GO" id="GO:0006412">
    <property type="term" value="P:translation"/>
    <property type="evidence" value="ECO:0007669"/>
    <property type="project" value="UniProtKB-UniRule"/>
</dbReference>
<dbReference type="HAMAP" id="MF_01363">
    <property type="entry name" value="Ribosomal_bL21"/>
    <property type="match status" value="1"/>
</dbReference>
<dbReference type="InterPro" id="IPR028909">
    <property type="entry name" value="bL21-like"/>
</dbReference>
<dbReference type="InterPro" id="IPR036164">
    <property type="entry name" value="bL21-like_sf"/>
</dbReference>
<dbReference type="InterPro" id="IPR001787">
    <property type="entry name" value="Ribosomal_bL21"/>
</dbReference>
<dbReference type="InterPro" id="IPR018258">
    <property type="entry name" value="Ribosomal_bL21_CS"/>
</dbReference>
<dbReference type="NCBIfam" id="TIGR00061">
    <property type="entry name" value="L21"/>
    <property type="match status" value="1"/>
</dbReference>
<dbReference type="PANTHER" id="PTHR21349">
    <property type="entry name" value="50S RIBOSOMAL PROTEIN L21"/>
    <property type="match status" value="1"/>
</dbReference>
<dbReference type="PANTHER" id="PTHR21349:SF0">
    <property type="entry name" value="LARGE RIBOSOMAL SUBUNIT PROTEIN BL21M"/>
    <property type="match status" value="1"/>
</dbReference>
<dbReference type="Pfam" id="PF00829">
    <property type="entry name" value="Ribosomal_L21p"/>
    <property type="match status" value="1"/>
</dbReference>
<dbReference type="SUPFAM" id="SSF141091">
    <property type="entry name" value="L21p-like"/>
    <property type="match status" value="1"/>
</dbReference>
<dbReference type="PROSITE" id="PS01169">
    <property type="entry name" value="RIBOSOMAL_L21"/>
    <property type="match status" value="1"/>
</dbReference>
<accession>B8F875</accession>
<keyword id="KW-1185">Reference proteome</keyword>
<keyword id="KW-0687">Ribonucleoprotein</keyword>
<keyword id="KW-0689">Ribosomal protein</keyword>
<keyword id="KW-0694">RNA-binding</keyword>
<keyword id="KW-0699">rRNA-binding</keyword>
<feature type="chain" id="PRO_1000166725" description="Large ribosomal subunit protein bL21">
    <location>
        <begin position="1"/>
        <end position="103"/>
    </location>
</feature>
<gene>
    <name evidence="1" type="primary">rplU</name>
    <name type="ordered locus">HAPS_2070</name>
</gene>
<reference key="1">
    <citation type="journal article" date="2009" name="J. Bacteriol.">
        <title>Complete genome sequence of Haemophilus parasuis SH0165.</title>
        <authorList>
            <person name="Yue M."/>
            <person name="Yang F."/>
            <person name="Yang J."/>
            <person name="Bei W."/>
            <person name="Cai X."/>
            <person name="Chen L."/>
            <person name="Dong J."/>
            <person name="Zhou R."/>
            <person name="Jin M."/>
            <person name="Jin Q."/>
            <person name="Chen H."/>
        </authorList>
    </citation>
    <scope>NUCLEOTIDE SEQUENCE [LARGE SCALE GENOMIC DNA]</scope>
    <source>
        <strain>SH0165</strain>
    </source>
</reference>
<organism>
    <name type="scientific">Glaesserella parasuis serovar 5 (strain SH0165)</name>
    <name type="common">Haemophilus parasuis</name>
    <dbReference type="NCBI Taxonomy" id="557723"/>
    <lineage>
        <taxon>Bacteria</taxon>
        <taxon>Pseudomonadati</taxon>
        <taxon>Pseudomonadota</taxon>
        <taxon>Gammaproteobacteria</taxon>
        <taxon>Pasteurellales</taxon>
        <taxon>Pasteurellaceae</taxon>
        <taxon>Glaesserella</taxon>
    </lineage>
</organism>
<protein>
    <recommendedName>
        <fullName evidence="1">Large ribosomal subunit protein bL21</fullName>
    </recommendedName>
    <alternativeName>
        <fullName evidence="2">50S ribosomal protein L21</fullName>
    </alternativeName>
</protein>
<comment type="function">
    <text evidence="1">This protein binds to 23S rRNA in the presence of protein L20.</text>
</comment>
<comment type="subunit">
    <text evidence="1">Part of the 50S ribosomal subunit. Contacts protein L20.</text>
</comment>
<comment type="similarity">
    <text evidence="1">Belongs to the bacterial ribosomal protein bL21 family.</text>
</comment>
<sequence length="103" mass="11494">MYAVFQSGGKQHRVSEGQVVRLEKLEVATGEKVEFDSVLMVVNGEDVKIGTPVVAGGKVVAEVVAHGRGEKVRIVKFRRRKHSRKQQGHRQWFTEVKITGIQA</sequence>